<evidence type="ECO:0000255" key="1">
    <source>
        <dbReference type="HAMAP-Rule" id="MF_00436"/>
    </source>
</evidence>
<evidence type="ECO:0000255" key="2">
    <source>
        <dbReference type="PROSITE-ProRule" id="PRU01346"/>
    </source>
</evidence>
<name>HFQ_BRUAB</name>
<keyword id="KW-0694">RNA-binding</keyword>
<keyword id="KW-0346">Stress response</keyword>
<organism>
    <name type="scientific">Brucella abortus biovar 1 (strain 9-941)</name>
    <dbReference type="NCBI Taxonomy" id="262698"/>
    <lineage>
        <taxon>Bacteria</taxon>
        <taxon>Pseudomonadati</taxon>
        <taxon>Pseudomonadota</taxon>
        <taxon>Alphaproteobacteria</taxon>
        <taxon>Hyphomicrobiales</taxon>
        <taxon>Brucellaceae</taxon>
        <taxon>Brucella/Ochrobactrum group</taxon>
        <taxon>Brucella</taxon>
    </lineage>
</organism>
<comment type="function">
    <text evidence="1">RNA chaperone that binds small regulatory RNA (sRNAs) and mRNAs to facilitate mRNA translational regulation in response to envelope stress, environmental stress and changes in metabolite concentrations. Also binds with high specificity to tRNAs.</text>
</comment>
<comment type="subunit">
    <text evidence="1">Homohexamer.</text>
</comment>
<comment type="similarity">
    <text evidence="1">Belongs to the Hfq family.</text>
</comment>
<gene>
    <name evidence="1" type="primary">hfq</name>
    <name type="ordered locus">BruAb1_1117</name>
</gene>
<accession>P0C107</accession>
<accession>P0A3G9</accession>
<accession>Q57D26</accession>
<accession>Q9XBW1</accession>
<dbReference type="EMBL" id="AE017223">
    <property type="protein sequence ID" value="AAX74458.1"/>
    <property type="molecule type" value="Genomic_DNA"/>
</dbReference>
<dbReference type="RefSeq" id="WP_002964239.1">
    <property type="nucleotide sequence ID" value="NC_006932.1"/>
</dbReference>
<dbReference type="SMR" id="P0C107"/>
<dbReference type="EnsemblBacteria" id="AAX74458">
    <property type="protein sequence ID" value="AAX74458"/>
    <property type="gene ID" value="BruAb1_1117"/>
</dbReference>
<dbReference type="GeneID" id="97533634"/>
<dbReference type="KEGG" id="bmb:BruAb1_1117"/>
<dbReference type="HOGENOM" id="CLU_113688_0_0_5"/>
<dbReference type="PRO" id="PR:P0C107"/>
<dbReference type="Proteomes" id="UP000000540">
    <property type="component" value="Chromosome I"/>
</dbReference>
<dbReference type="GO" id="GO:0005829">
    <property type="term" value="C:cytosol"/>
    <property type="evidence" value="ECO:0007669"/>
    <property type="project" value="TreeGrafter"/>
</dbReference>
<dbReference type="GO" id="GO:0003723">
    <property type="term" value="F:RNA binding"/>
    <property type="evidence" value="ECO:0007669"/>
    <property type="project" value="UniProtKB-UniRule"/>
</dbReference>
<dbReference type="GO" id="GO:0006355">
    <property type="term" value="P:regulation of DNA-templated transcription"/>
    <property type="evidence" value="ECO:0007669"/>
    <property type="project" value="InterPro"/>
</dbReference>
<dbReference type="GO" id="GO:0043487">
    <property type="term" value="P:regulation of RNA stability"/>
    <property type="evidence" value="ECO:0007669"/>
    <property type="project" value="TreeGrafter"/>
</dbReference>
<dbReference type="GO" id="GO:0045974">
    <property type="term" value="P:regulation of translation, ncRNA-mediated"/>
    <property type="evidence" value="ECO:0007669"/>
    <property type="project" value="TreeGrafter"/>
</dbReference>
<dbReference type="CDD" id="cd01716">
    <property type="entry name" value="Hfq"/>
    <property type="match status" value="1"/>
</dbReference>
<dbReference type="Gene3D" id="2.30.30.100">
    <property type="match status" value="1"/>
</dbReference>
<dbReference type="HAMAP" id="MF_00436">
    <property type="entry name" value="Hfq"/>
    <property type="match status" value="1"/>
</dbReference>
<dbReference type="InterPro" id="IPR005001">
    <property type="entry name" value="Hfq"/>
</dbReference>
<dbReference type="InterPro" id="IPR010920">
    <property type="entry name" value="LSM_dom_sf"/>
</dbReference>
<dbReference type="InterPro" id="IPR047575">
    <property type="entry name" value="Sm"/>
</dbReference>
<dbReference type="NCBIfam" id="TIGR02383">
    <property type="entry name" value="Hfq"/>
    <property type="match status" value="1"/>
</dbReference>
<dbReference type="NCBIfam" id="NF001602">
    <property type="entry name" value="PRK00395.1"/>
    <property type="match status" value="1"/>
</dbReference>
<dbReference type="PANTHER" id="PTHR34772">
    <property type="entry name" value="RNA-BINDING PROTEIN HFQ"/>
    <property type="match status" value="1"/>
</dbReference>
<dbReference type="PANTHER" id="PTHR34772:SF1">
    <property type="entry name" value="RNA-BINDING PROTEIN HFQ"/>
    <property type="match status" value="1"/>
</dbReference>
<dbReference type="Pfam" id="PF17209">
    <property type="entry name" value="Hfq"/>
    <property type="match status" value="1"/>
</dbReference>
<dbReference type="SUPFAM" id="SSF50182">
    <property type="entry name" value="Sm-like ribonucleoproteins"/>
    <property type="match status" value="1"/>
</dbReference>
<dbReference type="PROSITE" id="PS52002">
    <property type="entry name" value="SM"/>
    <property type="match status" value="1"/>
</dbReference>
<sequence length="78" mass="8854">MAERSQNLQDLFLNSVRKQKISLTIFLINGVKLTGIVTSFDNFCVLLRRDGHSQLVYKHAISTIMPSQPVQMFEGEEA</sequence>
<protein>
    <recommendedName>
        <fullName evidence="1">RNA-binding protein Hfq</fullName>
    </recommendedName>
</protein>
<proteinExistence type="inferred from homology"/>
<feature type="chain" id="PRO_0000095627" description="RNA-binding protein Hfq">
    <location>
        <begin position="1"/>
        <end position="78"/>
    </location>
</feature>
<feature type="domain" description="Sm" evidence="2">
    <location>
        <begin position="10"/>
        <end position="70"/>
    </location>
</feature>
<reference key="1">
    <citation type="journal article" date="2005" name="J. Bacteriol.">
        <title>Completion of the genome sequence of Brucella abortus and comparison to the highly similar genomes of Brucella melitensis and Brucella suis.</title>
        <authorList>
            <person name="Halling S.M."/>
            <person name="Peterson-Burch B.D."/>
            <person name="Bricker B.J."/>
            <person name="Zuerner R.L."/>
            <person name="Qing Z."/>
            <person name="Li L.-L."/>
            <person name="Kapur V."/>
            <person name="Alt D.P."/>
            <person name="Olsen S.C."/>
        </authorList>
    </citation>
    <scope>NUCLEOTIDE SEQUENCE [LARGE SCALE GENOMIC DNA]</scope>
    <source>
        <strain>9-941</strain>
    </source>
</reference>